<feature type="chain" id="PRO_0000051059" description="Probable histone-binding protein lin-53">
    <location>
        <begin position="1"/>
        <end position="417"/>
    </location>
</feature>
<feature type="repeat" description="WD 1">
    <location>
        <begin position="118"/>
        <end position="158"/>
    </location>
</feature>
<feature type="repeat" description="WD 2">
    <location>
        <begin position="170"/>
        <end position="210"/>
    </location>
</feature>
<feature type="repeat" description="WD 3">
    <location>
        <begin position="220"/>
        <end position="260"/>
    </location>
</feature>
<feature type="repeat" description="WD 4">
    <location>
        <begin position="263"/>
        <end position="303"/>
    </location>
</feature>
<feature type="repeat" description="WD 5">
    <location>
        <begin position="307"/>
        <end position="347"/>
    </location>
</feature>
<feature type="repeat" description="WD 6">
    <location>
        <begin position="364"/>
        <end position="404"/>
    </location>
</feature>
<feature type="mutagenesis site" description="In semidominant alleles n883 and n2978; causes development of multiple vulvas." evidence="8">
    <original>L</original>
    <variation>F</variation>
    <location>
        <position position="292"/>
    </location>
</feature>
<keyword id="KW-0137">Centromere</keyword>
<keyword id="KW-0156">Chromatin regulator</keyword>
<keyword id="KW-0158">Chromosome</keyword>
<keyword id="KW-0217">Developmental protein</keyword>
<keyword id="KW-0539">Nucleus</keyword>
<keyword id="KW-1185">Reference proteome</keyword>
<keyword id="KW-0677">Repeat</keyword>
<keyword id="KW-0678">Repressor</keyword>
<keyword id="KW-0804">Transcription</keyword>
<keyword id="KW-0805">Transcription regulation</keyword>
<keyword id="KW-0853">WD repeat</keyword>
<dbReference type="EMBL" id="AF116530">
    <property type="protein sequence ID" value="AAD05571.1"/>
    <property type="molecule type" value="mRNA"/>
</dbReference>
<dbReference type="EMBL" id="Z81097">
    <property type="protein sequence ID" value="CAB03178.1"/>
    <property type="molecule type" value="Genomic_DNA"/>
</dbReference>
<dbReference type="EMBL" id="AL023833">
    <property type="protein sequence ID" value="CAB03178.1"/>
    <property type="status" value="JOINED"/>
    <property type="molecule type" value="Genomic_DNA"/>
</dbReference>
<dbReference type="PIR" id="T23391">
    <property type="entry name" value="T23391"/>
</dbReference>
<dbReference type="RefSeq" id="NP_492552.1">
    <property type="nucleotide sequence ID" value="NM_060151.9"/>
</dbReference>
<dbReference type="SMR" id="P90916"/>
<dbReference type="BioGRID" id="38227">
    <property type="interactions" value="481"/>
</dbReference>
<dbReference type="ComplexPortal" id="CPX-1100">
    <property type="entry name" value="DRM complex"/>
</dbReference>
<dbReference type="DIP" id="DIP-24440N"/>
<dbReference type="FunCoup" id="P90916">
    <property type="interactions" value="3200"/>
</dbReference>
<dbReference type="IntAct" id="P90916">
    <property type="interactions" value="10"/>
</dbReference>
<dbReference type="MINT" id="P90916"/>
<dbReference type="STRING" id="6239.K07A1.12.1"/>
<dbReference type="PaxDb" id="6239-K07A1.12"/>
<dbReference type="PeptideAtlas" id="P90916"/>
<dbReference type="EnsemblMetazoa" id="K07A1.12.1">
    <property type="protein sequence ID" value="K07A1.12.1"/>
    <property type="gene ID" value="WBGene00003036"/>
</dbReference>
<dbReference type="GeneID" id="172802"/>
<dbReference type="KEGG" id="cel:CELE_K07A1.12"/>
<dbReference type="UCSC" id="K07A1.12.1">
    <property type="organism name" value="c. elegans"/>
</dbReference>
<dbReference type="AGR" id="WB:WBGene00003036"/>
<dbReference type="CTD" id="172802"/>
<dbReference type="WormBase" id="K07A1.12">
    <property type="protein sequence ID" value="CE16234"/>
    <property type="gene ID" value="WBGene00003036"/>
    <property type="gene designation" value="lin-53"/>
</dbReference>
<dbReference type="eggNOG" id="KOG0264">
    <property type="taxonomic scope" value="Eukaryota"/>
</dbReference>
<dbReference type="GeneTree" id="ENSGT00940000154748"/>
<dbReference type="HOGENOM" id="CLU_020445_3_1_1"/>
<dbReference type="InParanoid" id="P90916"/>
<dbReference type="OMA" id="PHEEGCL"/>
<dbReference type="OrthoDB" id="427795at2759"/>
<dbReference type="PhylomeDB" id="P90916"/>
<dbReference type="Reactome" id="R-CEL-1538133">
    <property type="pathway name" value="G0 and Early G1"/>
</dbReference>
<dbReference type="Reactome" id="R-CEL-2559580">
    <property type="pathway name" value="Oxidative Stress Induced Senescence"/>
</dbReference>
<dbReference type="Reactome" id="R-CEL-3214847">
    <property type="pathway name" value="HATs acetylate histones"/>
</dbReference>
<dbReference type="Reactome" id="R-CEL-3214858">
    <property type="pathway name" value="RMTs methylate histone arginines"/>
</dbReference>
<dbReference type="Reactome" id="R-CEL-6804758">
    <property type="pathway name" value="Regulation of TP53 Activity through Acetylation"/>
</dbReference>
<dbReference type="Reactome" id="R-CEL-8943724">
    <property type="pathway name" value="Regulation of PTEN gene transcription"/>
</dbReference>
<dbReference type="Reactome" id="R-CEL-8951664">
    <property type="pathway name" value="Neddylation"/>
</dbReference>
<dbReference type="PRO" id="PR:P90916"/>
<dbReference type="Proteomes" id="UP000001940">
    <property type="component" value="Chromosome I"/>
</dbReference>
<dbReference type="Bgee" id="WBGene00003036">
    <property type="expression patterns" value="Expressed in embryo and 4 other cell types or tissues"/>
</dbReference>
<dbReference type="GO" id="GO:0000775">
    <property type="term" value="C:chromosome, centromeric region"/>
    <property type="evidence" value="ECO:0007669"/>
    <property type="project" value="UniProtKB-SubCell"/>
</dbReference>
<dbReference type="GO" id="GO:0070176">
    <property type="term" value="C:DRM complex"/>
    <property type="evidence" value="ECO:0000314"/>
    <property type="project" value="UniProtKB"/>
</dbReference>
<dbReference type="GO" id="GO:0035098">
    <property type="term" value="C:ESC/E(Z) complex"/>
    <property type="evidence" value="ECO:0000318"/>
    <property type="project" value="GO_Central"/>
</dbReference>
<dbReference type="GO" id="GO:0005634">
    <property type="term" value="C:nucleus"/>
    <property type="evidence" value="ECO:0000314"/>
    <property type="project" value="UniProtKB"/>
</dbReference>
<dbReference type="GO" id="GO:0016581">
    <property type="term" value="C:NuRD complex"/>
    <property type="evidence" value="ECO:0000315"/>
    <property type="project" value="UniProtKB"/>
</dbReference>
<dbReference type="GO" id="GO:0017053">
    <property type="term" value="C:transcription repressor complex"/>
    <property type="evidence" value="ECO:0000314"/>
    <property type="project" value="UniProtKB"/>
</dbReference>
<dbReference type="GO" id="GO:0042393">
    <property type="term" value="F:histone binding"/>
    <property type="evidence" value="ECO:0000318"/>
    <property type="project" value="GO_Central"/>
</dbReference>
<dbReference type="GO" id="GO:0042826">
    <property type="term" value="F:histone deacetylase binding"/>
    <property type="evidence" value="ECO:0000353"/>
    <property type="project" value="UniProtKB"/>
</dbReference>
<dbReference type="GO" id="GO:0001708">
    <property type="term" value="P:cell fate specification"/>
    <property type="evidence" value="ECO:0000315"/>
    <property type="project" value="WormBase"/>
</dbReference>
<dbReference type="GO" id="GO:0006325">
    <property type="term" value="P:chromatin organization"/>
    <property type="evidence" value="ECO:0000315"/>
    <property type="project" value="UniProtKB"/>
</dbReference>
<dbReference type="GO" id="GO:0006338">
    <property type="term" value="P:chromatin remodeling"/>
    <property type="evidence" value="ECO:0000318"/>
    <property type="project" value="GO_Central"/>
</dbReference>
<dbReference type="GO" id="GO:0009792">
    <property type="term" value="P:embryo development ending in birth or egg hatching"/>
    <property type="evidence" value="ECO:0000315"/>
    <property type="project" value="UniProtKB"/>
</dbReference>
<dbReference type="GO" id="GO:0048557">
    <property type="term" value="P:embryonic digestive tract morphogenesis"/>
    <property type="evidence" value="ECO:0000316"/>
    <property type="project" value="WormBase"/>
</dbReference>
<dbReference type="GO" id="GO:0034514">
    <property type="term" value="P:mitochondrial unfolded protein response"/>
    <property type="evidence" value="ECO:0000315"/>
    <property type="project" value="UniProtKB"/>
</dbReference>
<dbReference type="GO" id="GO:0045892">
    <property type="term" value="P:negative regulation of DNA-templated transcription"/>
    <property type="evidence" value="ECO:0000303"/>
    <property type="project" value="UniProtKB"/>
</dbReference>
<dbReference type="GO" id="GO:0040027">
    <property type="term" value="P:negative regulation of vulval development"/>
    <property type="evidence" value="ECO:0000314"/>
    <property type="project" value="ComplexPortal"/>
</dbReference>
<dbReference type="GO" id="GO:0045138">
    <property type="term" value="P:nematode male tail tip morphogenesis"/>
    <property type="evidence" value="ECO:0000315"/>
    <property type="project" value="WormBase"/>
</dbReference>
<dbReference type="GO" id="GO:0006355">
    <property type="term" value="P:regulation of DNA-templated transcription"/>
    <property type="evidence" value="ECO:0000318"/>
    <property type="project" value="GO_Central"/>
</dbReference>
<dbReference type="CDD" id="cd00200">
    <property type="entry name" value="WD40"/>
    <property type="match status" value="1"/>
</dbReference>
<dbReference type="FunFam" id="2.130.10.10:FF:000021">
    <property type="entry name" value="histone-binding protein RBBP4 isoform X1"/>
    <property type="match status" value="1"/>
</dbReference>
<dbReference type="Gene3D" id="2.130.10.10">
    <property type="entry name" value="YVTN repeat-like/Quinoprotein amine dehydrogenase"/>
    <property type="match status" value="1"/>
</dbReference>
<dbReference type="InterPro" id="IPR020472">
    <property type="entry name" value="G-protein_beta_WD-40_rep"/>
</dbReference>
<dbReference type="InterPro" id="IPR022052">
    <property type="entry name" value="Histone-bd_RBBP4-like_N"/>
</dbReference>
<dbReference type="InterPro" id="IPR015943">
    <property type="entry name" value="WD40/YVTN_repeat-like_dom_sf"/>
</dbReference>
<dbReference type="InterPro" id="IPR019775">
    <property type="entry name" value="WD40_repeat_CS"/>
</dbReference>
<dbReference type="InterPro" id="IPR036322">
    <property type="entry name" value="WD40_repeat_dom_sf"/>
</dbReference>
<dbReference type="InterPro" id="IPR001680">
    <property type="entry name" value="WD40_rpt"/>
</dbReference>
<dbReference type="InterPro" id="IPR050459">
    <property type="entry name" value="WD_repeat_RBAP46/RBAP48/MSI1"/>
</dbReference>
<dbReference type="PANTHER" id="PTHR22850">
    <property type="entry name" value="WD40 REPEAT FAMILY"/>
    <property type="match status" value="1"/>
</dbReference>
<dbReference type="Pfam" id="PF12265">
    <property type="entry name" value="CAF1C_H4-bd"/>
    <property type="match status" value="1"/>
</dbReference>
<dbReference type="Pfam" id="PF00400">
    <property type="entry name" value="WD40"/>
    <property type="match status" value="5"/>
</dbReference>
<dbReference type="PRINTS" id="PR00320">
    <property type="entry name" value="GPROTEINBRPT"/>
</dbReference>
<dbReference type="SMART" id="SM00320">
    <property type="entry name" value="WD40"/>
    <property type="match status" value="6"/>
</dbReference>
<dbReference type="SUPFAM" id="SSF50978">
    <property type="entry name" value="WD40 repeat-like"/>
    <property type="match status" value="1"/>
</dbReference>
<dbReference type="PROSITE" id="PS00678">
    <property type="entry name" value="WD_REPEATS_1"/>
    <property type="match status" value="2"/>
</dbReference>
<dbReference type="PROSITE" id="PS50082">
    <property type="entry name" value="WD_REPEATS_2"/>
    <property type="match status" value="5"/>
</dbReference>
<dbReference type="PROSITE" id="PS50294">
    <property type="entry name" value="WD_REPEATS_REGION"/>
    <property type="match status" value="1"/>
</dbReference>
<comment type="function">
    <text evidence="1 3 4 6 7 8">Core histone-binding subunit that may target chromatin assembly factors, chromatin remodeling factors and histone deacetylases to their histone substrates in a manner that is regulated by nucleosomal DNA (By similarity). Required for hcp-3 and his-1 stabilization, localization of hcp-3 to centromeres and for proper chromosome segregation (PubMed:25446273, PubMed:26904949). Synthetic multivulva class B (synMuvB) protein (PubMed:9875852). SynMuvB proteins are required to repress the induction of vulval development by Ras signaling and probably act by forming the multiprotein DRM complex that represses transcription (PubMed:10704416, PubMed:17075059, PubMed:9875852).</text>
</comment>
<comment type="subunit">
    <text evidence="2 4 7 8 9">Binds directly to helix 1 of the histone fold of histone H4, a region that is not accessible when H4 is in chromatin (By similarity). Probable component of a NuRD-like complex, composed of at least lin-53 and hda-1 (PubMed:17075059). Interacts with lin-35 (PubMed:9875852). Interacts with hda-1; the interaction is direct (PubMed:17075059, PubMed:9875852). Component of the DRM complex, at least composed of lin-9, lin-35, lin-37, lin-52, lin-53, lin-54- dpl-1 and efl-1 (PubMed:17075059). Interacts with hcp-3 (PubMed:26904949).</text>
</comment>
<comment type="interaction">
    <interactant intactId="EBI-324314">
        <id>P90916</id>
    </interactant>
    <interactant intactId="EBI-324325">
        <id>Q23482</id>
        <label>lin-37</label>
    </interactant>
    <organismsDiffer>false</organismsDiffer>
    <experiments>5</experiments>
</comment>
<comment type="subcellular location">
    <subcellularLocation>
        <location evidence="8">Nucleus</location>
    </subcellularLocation>
    <subcellularLocation>
        <location evidence="7">Chromosome</location>
        <location evidence="7">Centromere</location>
    </subcellularLocation>
    <text evidence="7">Localizes to centromeres during metaphase. Requires hcp-3 and knl-2 for nuclear and centromere localization.</text>
</comment>
<comment type="developmental stage">
    <text evidence="8">Ubiquitously expressed in embryos and newly hatched larvae. Expressed in all P(3-8).p vulval precursor cells at the time of vulval induction and until after all cell divisions and vulval morphogenesis are complete.</text>
</comment>
<comment type="disruption phenotype">
    <text evidence="4 5 6 7 8">Decreased protein levels of DRM complex components including lin-9, lin-37, lin-52 and lin-54 (PubMed:17075059). Double knockout with the programmed cell death regulator mcd-1 results slow larval growth (PubMed:17237514). RNAi-mediated knockdown results in embryonic lethality (PubMed:26904949, PubMed:9875852). RNAi-mediated knockdown leads to a reduction of hcp-3 and his-1 protein levels and to a depletion of hcp-3 on centromeres and a reduction of H3K27me3 levels on metaphase chromosomes (PubMed:26904949). RNAi-mediated knockdown results in chromosome segregation defects during mitosis (PubMed:25446273, PubMed:26904949).</text>
</comment>
<comment type="similarity">
    <text evidence="9">Belongs to the WD repeat RBAP46/RBAP48/MSI1 family.</text>
</comment>
<protein>
    <recommendedName>
        <fullName>Probable histone-binding protein lin-53</fullName>
    </recommendedName>
    <alternativeName>
        <fullName>Abnormal cell lineage protein 53</fullName>
    </alternativeName>
    <alternativeName>
        <fullName>Synthetic multivulva protein p48</fullName>
    </alternativeName>
</protein>
<name>LIN53_CAEEL</name>
<reference key="1">
    <citation type="journal article" date="1998" name="Cell">
        <title>lin-35 and lin-53, two genes that antagonize a C. elegans Ras pathway, encode proteins similar to Rb and its binding protein RbAp48.</title>
        <authorList>
            <person name="Lu X."/>
            <person name="Horvitz H.R."/>
        </authorList>
    </citation>
    <scope>NUCLEOTIDE SEQUENCE [MRNA]</scope>
    <scope>FUNCTION</scope>
    <scope>INTERACTION WITH LIN-35 AND HDA-1</scope>
    <scope>SUBCELLULAR LOCATION</scope>
    <scope>DEVELOPMENTAL STAGE</scope>
    <scope>DISRUPTION PHENOTYPE</scope>
    <scope>MUTAGENESIS OF LEU-292</scope>
</reference>
<reference key="2">
    <citation type="journal article" date="1998" name="Science">
        <title>Genome sequence of the nematode C. elegans: a platform for investigating biology.</title>
        <authorList>
            <consortium name="The C. elegans sequencing consortium"/>
        </authorList>
    </citation>
    <scope>NUCLEOTIDE SEQUENCE [LARGE SCALE GENOMIC DNA]</scope>
    <source>
        <strain>Bristol N2</strain>
    </source>
</reference>
<reference key="3">
    <citation type="journal article" date="2000" name="Curr. Biol.">
        <title>NURD-complex genes antagonise Ras-induced vulval development in Caenorhabditis elegans.</title>
        <authorList>
            <person name="Solari F."/>
            <person name="Ahringer J."/>
        </authorList>
    </citation>
    <scope>FUNCTION</scope>
</reference>
<reference key="4">
    <citation type="journal article" date="2006" name="Proc. Natl. Acad. Sci. U.S.A.">
        <title>Some C. elegans class B synthetic multivulva proteins encode a conserved LIN-35 Rb-containing complex distinct from a NuRD-like complex.</title>
        <authorList>
            <person name="Harrison M.M."/>
            <person name="Ceol C.J."/>
            <person name="Lu X."/>
            <person name="Horvitz H.R."/>
        </authorList>
    </citation>
    <scope>FUNCTION</scope>
    <scope>IDENTIFICATION IN THE DRM COMPLEX</scope>
    <scope>IDENTIFICATION IN COMPLEX WITH HDA-1</scope>
    <scope>DISRUPTION PHENOTYPE</scope>
</reference>
<reference key="5">
    <citation type="journal article" date="2007" name="Genetics">
        <title>DPL-1 DP, LIN-35 Rb and EFL-1 E2F act with the MCD-1 zinc-finger protein to promote programmed cell death in Caenorhabditis elegans.</title>
        <authorList>
            <person name="Reddien P.W."/>
            <person name="Andersen E.C."/>
            <person name="Huang M.C."/>
            <person name="Horvitz H.R."/>
        </authorList>
    </citation>
    <scope>DISRUPTION PHENOTYPE</scope>
</reference>
<reference key="6">
    <citation type="journal article" date="2015" name="Dev. Biol.">
        <title>Comprehensive single cell-resolution analysis of the role of chromatin regulators in early C. elegans embryogenesis.</title>
        <authorList>
            <person name="Krueger A.V."/>
            <person name="Jelier R."/>
            <person name="Dzyubachyk O."/>
            <person name="Zimmerman T."/>
            <person name="Meijering E."/>
            <person name="Lehner B."/>
        </authorList>
    </citation>
    <scope>FUNCTION</scope>
    <scope>DISRUPTION PHENOTYPE</scope>
</reference>
<reference key="7">
    <citation type="journal article" date="2016" name="Cell Rep.">
        <title>RbAp46/48(LIN-53) is required for holocentromere assembly in Caenorhabditis elegans.</title>
        <authorList>
            <person name="Lee B.C."/>
            <person name="Lin Z."/>
            <person name="Yuen K.W."/>
        </authorList>
    </citation>
    <scope>FUNCTION</scope>
    <scope>INTERACTION WITH HCP-3</scope>
    <scope>SUBCELLULAR LOCATION</scope>
    <scope>DISRUPTION PHENOTYPE</scope>
</reference>
<accession>P90916</accession>
<accession>A2JDY3</accession>
<accession>O62411</accession>
<sequence length="417" mass="47166">MATLEDGTSEDRVANDEYKIWKKNTPFLYDLVMTHALEWPSLSVQWLPDVAKDNSDHTIHRLILGTHTSDEQNHLLISKICMPTDDAQFDASRYDTERSEYGGFGAVNGKVEPDIRINHEGEVNRARYMPQKSNIIATKSPHADVYIFDYLKHSAVPRDNTFNPLIRLKGHTKEGYGLSWNPNKEGLILSASDDQTVCHWDINANQNVAGELQAKDVFKGHESVVEDVAWHVLHDGVFGSVGDDKKLLIWDVRTSTPGHCIDAHSAEVNCLAFNPYSEFILATGSADKTVALWDLRNLRMKLHSFESHRDEIFQVQWSPHNETILASSGTDKRLHVWDLSKIGEDQSAEDAEDGPPELLFIHGGHTAKISDFSWNPNEPWVVCSVSEDNILQVWQMADNIYNEVDEETPADVVERQQ</sequence>
<gene>
    <name evidence="10" type="primary">lin-53</name>
    <name evidence="10" type="synonym">rba-2</name>
    <name evidence="10" type="ORF">K07A1.12</name>
</gene>
<proteinExistence type="evidence at protein level"/>
<organism>
    <name type="scientific">Caenorhabditis elegans</name>
    <dbReference type="NCBI Taxonomy" id="6239"/>
    <lineage>
        <taxon>Eukaryota</taxon>
        <taxon>Metazoa</taxon>
        <taxon>Ecdysozoa</taxon>
        <taxon>Nematoda</taxon>
        <taxon>Chromadorea</taxon>
        <taxon>Rhabditida</taxon>
        <taxon>Rhabditina</taxon>
        <taxon>Rhabditomorpha</taxon>
        <taxon>Rhabditoidea</taxon>
        <taxon>Rhabditidae</taxon>
        <taxon>Peloderinae</taxon>
        <taxon>Caenorhabditis</taxon>
    </lineage>
</organism>
<evidence type="ECO:0000250" key="1">
    <source>
        <dbReference type="UniProtKB" id="Q09028"/>
    </source>
</evidence>
<evidence type="ECO:0000250" key="2">
    <source>
        <dbReference type="UniProtKB" id="Q24572"/>
    </source>
</evidence>
<evidence type="ECO:0000269" key="3">
    <source>
    </source>
</evidence>
<evidence type="ECO:0000269" key="4">
    <source>
    </source>
</evidence>
<evidence type="ECO:0000269" key="5">
    <source>
    </source>
</evidence>
<evidence type="ECO:0000269" key="6">
    <source>
    </source>
</evidence>
<evidence type="ECO:0000269" key="7">
    <source>
    </source>
</evidence>
<evidence type="ECO:0000269" key="8">
    <source>
    </source>
</evidence>
<evidence type="ECO:0000305" key="9"/>
<evidence type="ECO:0000312" key="10">
    <source>
        <dbReference type="WormBase" id="K07A1.12"/>
    </source>
</evidence>